<protein>
    <recommendedName>
        <fullName>Ankyrin repeat, SAM and basic leucine zipper domain-containing protein 1</fullName>
    </recommendedName>
    <alternativeName>
        <fullName>Germ cell-specific ankyrin, SAM and basic leucine zipper domain-containing protein</fullName>
    </alternativeName>
</protein>
<reference key="1">
    <citation type="journal article" date="2002" name="Mol. Endocrinol.">
        <title>Identification of Gasz, an evolutionarily conserved gene expressed exclusively in germ cells and encoding a protein with four ankyrin repeats, a sterile-alpha motif, and a basic leucine zipper.</title>
        <authorList>
            <person name="Yan W."/>
            <person name="Rajkovic A."/>
            <person name="Viveiros M.M."/>
            <person name="Burns K.H."/>
            <person name="Eppig J.J."/>
            <person name="Matzuk M.M."/>
        </authorList>
    </citation>
    <scope>NUCLEOTIDE SEQUENCE [MRNA]</scope>
</reference>
<reference key="2">
    <citation type="journal article" date="2003" name="Nature">
        <title>Comparative analyses of multi-species sequences from targeted genomic regions.</title>
        <authorList>
            <person name="Thomas J.W."/>
            <person name="Touchman J.W."/>
            <person name="Blakesley R.W."/>
            <person name="Bouffard G.G."/>
            <person name="Beckstrom-Sternberg S.M."/>
            <person name="Margulies E.H."/>
            <person name="Blanchette M."/>
            <person name="Siepel A.C."/>
            <person name="Thomas P.J."/>
            <person name="McDowell J.C."/>
            <person name="Maskeri B."/>
            <person name="Hansen N.F."/>
            <person name="Schwartz M.S."/>
            <person name="Weber R.J."/>
            <person name="Kent W.J."/>
            <person name="Karolchik D."/>
            <person name="Bruen T.C."/>
            <person name="Bevan R."/>
            <person name="Cutler D.J."/>
            <person name="Schwartz S."/>
            <person name="Elnitski L."/>
            <person name="Idol J.R."/>
            <person name="Prasad A.B."/>
            <person name="Lee-Lin S.-Q."/>
            <person name="Maduro V.V.B."/>
            <person name="Summers T.J."/>
            <person name="Portnoy M.E."/>
            <person name="Dietrich N.L."/>
            <person name="Akhter N."/>
            <person name="Ayele K."/>
            <person name="Benjamin B."/>
            <person name="Cariaga K."/>
            <person name="Brinkley C.P."/>
            <person name="Brooks S.Y."/>
            <person name="Granite S."/>
            <person name="Guan X."/>
            <person name="Gupta J."/>
            <person name="Haghighi P."/>
            <person name="Ho S.-L."/>
            <person name="Huang M.C."/>
            <person name="Karlins E."/>
            <person name="Laric P.L."/>
            <person name="Legaspi R."/>
            <person name="Lim M.J."/>
            <person name="Maduro Q.L."/>
            <person name="Masiello C.A."/>
            <person name="Mastrian S.D."/>
            <person name="McCloskey J.C."/>
            <person name="Pearson R."/>
            <person name="Stantripop S."/>
            <person name="Tiongson E.E."/>
            <person name="Tran J.T."/>
            <person name="Tsurgeon C."/>
            <person name="Vogt J.L."/>
            <person name="Walker M.A."/>
            <person name="Wetherby K.D."/>
            <person name="Wiggins L.S."/>
            <person name="Young A.C."/>
            <person name="Zhang L.-H."/>
            <person name="Osoegawa K."/>
            <person name="Zhu B."/>
            <person name="Zhao B."/>
            <person name="Shu C.L."/>
            <person name="De Jong P.J."/>
            <person name="Lawrence C.E."/>
            <person name="Smit A.F."/>
            <person name="Chakravarti A."/>
            <person name="Haussler D."/>
            <person name="Green P."/>
            <person name="Miller W."/>
            <person name="Green E.D."/>
        </authorList>
    </citation>
    <scope>NUCLEOTIDE SEQUENCE [LARGE SCALE GENOMIC DNA]</scope>
</reference>
<dbReference type="EMBL" id="AF461263">
    <property type="protein sequence ID" value="AAL68819.1"/>
    <property type="molecule type" value="mRNA"/>
</dbReference>
<dbReference type="EMBL" id="DP000016">
    <property type="protein sequence ID" value="AAR16252.1"/>
    <property type="molecule type" value="Genomic_DNA"/>
</dbReference>
<dbReference type="RefSeq" id="NP_001009035.1">
    <property type="nucleotide sequence ID" value="NM_001009035.1"/>
</dbReference>
<dbReference type="SMR" id="Q8WMX6"/>
<dbReference type="FunCoup" id="Q8WMX6">
    <property type="interactions" value="25"/>
</dbReference>
<dbReference type="STRING" id="9598.ENSPTRP00000033595"/>
<dbReference type="PaxDb" id="9598-ENSPTRP00000033595"/>
<dbReference type="Ensembl" id="ENSPTRT00000036337.4">
    <property type="protein sequence ID" value="ENSPTRP00000033595.3"/>
    <property type="gene ID" value="ENSPTRG00000019618.4"/>
</dbReference>
<dbReference type="GeneID" id="450111"/>
<dbReference type="KEGG" id="ptr:450111"/>
<dbReference type="CTD" id="136991"/>
<dbReference type="VGNC" id="VGNC:7215">
    <property type="gene designation" value="ASZ1"/>
</dbReference>
<dbReference type="eggNOG" id="KOG0504">
    <property type="taxonomic scope" value="Eukaryota"/>
</dbReference>
<dbReference type="GeneTree" id="ENSGT00880000138051"/>
<dbReference type="HOGENOM" id="CLU_053259_0_0_1"/>
<dbReference type="InParanoid" id="Q8WMX6"/>
<dbReference type="OMA" id="FVCKLTF"/>
<dbReference type="OrthoDB" id="4259at9604"/>
<dbReference type="TreeFam" id="TF352216"/>
<dbReference type="Proteomes" id="UP000002277">
    <property type="component" value="Chromosome 7"/>
</dbReference>
<dbReference type="Bgee" id="ENSPTRG00000019618">
    <property type="expression patterns" value="Expressed in testis"/>
</dbReference>
<dbReference type="GO" id="GO:0071546">
    <property type="term" value="C:pi-body"/>
    <property type="evidence" value="ECO:0000250"/>
    <property type="project" value="UniProtKB"/>
</dbReference>
<dbReference type="GO" id="GO:0030154">
    <property type="term" value="P:cell differentiation"/>
    <property type="evidence" value="ECO:0007669"/>
    <property type="project" value="UniProtKB-KW"/>
</dbReference>
<dbReference type="GO" id="GO:0007140">
    <property type="term" value="P:male meiotic nuclear division"/>
    <property type="evidence" value="ECO:0000250"/>
    <property type="project" value="UniProtKB"/>
</dbReference>
<dbReference type="GO" id="GO:0031047">
    <property type="term" value="P:regulatory ncRNA-mediated gene silencing"/>
    <property type="evidence" value="ECO:0007669"/>
    <property type="project" value="UniProtKB-KW"/>
</dbReference>
<dbReference type="GO" id="GO:0007283">
    <property type="term" value="P:spermatogenesis"/>
    <property type="evidence" value="ECO:0000250"/>
    <property type="project" value="UniProtKB"/>
</dbReference>
<dbReference type="GO" id="GO:0010526">
    <property type="term" value="P:transposable element silencing"/>
    <property type="evidence" value="ECO:0000250"/>
    <property type="project" value="UniProtKB"/>
</dbReference>
<dbReference type="CDD" id="cd09521">
    <property type="entry name" value="SAM_ASZ1"/>
    <property type="match status" value="1"/>
</dbReference>
<dbReference type="FunFam" id="1.25.40.20:FF:000192">
    <property type="entry name" value="Ankyrin repeat, SAM and basic leucine zipper domain-containing 1"/>
    <property type="match status" value="1"/>
</dbReference>
<dbReference type="FunFam" id="1.10.150.50:FF:000060">
    <property type="entry name" value="Ankyrin repeat, SAM and basic leucine zipper domain-containing protein 1"/>
    <property type="match status" value="1"/>
</dbReference>
<dbReference type="Gene3D" id="1.25.40.20">
    <property type="entry name" value="Ankyrin repeat-containing domain"/>
    <property type="match status" value="1"/>
</dbReference>
<dbReference type="Gene3D" id="1.10.150.50">
    <property type="entry name" value="Transcription Factor, Ets-1"/>
    <property type="match status" value="1"/>
</dbReference>
<dbReference type="InterPro" id="IPR002110">
    <property type="entry name" value="Ankyrin_rpt"/>
</dbReference>
<dbReference type="InterPro" id="IPR036770">
    <property type="entry name" value="Ankyrin_rpt-contain_sf"/>
</dbReference>
<dbReference type="InterPro" id="IPR042650">
    <property type="entry name" value="Asz1_SAM"/>
</dbReference>
<dbReference type="InterPro" id="IPR001660">
    <property type="entry name" value="SAM"/>
</dbReference>
<dbReference type="InterPro" id="IPR013761">
    <property type="entry name" value="SAM/pointed_sf"/>
</dbReference>
<dbReference type="PANTHER" id="PTHR24157">
    <property type="entry name" value="ANKYRIN REPEAT, SAM AND BASIC LEUCINE ZIPPER DOMAIN-CONTAINING PROTEIN 1"/>
    <property type="match status" value="1"/>
</dbReference>
<dbReference type="PANTHER" id="PTHR24157:SF3">
    <property type="entry name" value="ANKYRIN REPEAT, SAM AND BASIC LEUCINE ZIPPER DOMAIN-CONTAINING PROTEIN 1"/>
    <property type="match status" value="1"/>
</dbReference>
<dbReference type="Pfam" id="PF00023">
    <property type="entry name" value="Ank"/>
    <property type="match status" value="1"/>
</dbReference>
<dbReference type="Pfam" id="PF12796">
    <property type="entry name" value="Ank_2"/>
    <property type="match status" value="1"/>
</dbReference>
<dbReference type="Pfam" id="PF07647">
    <property type="entry name" value="SAM_2"/>
    <property type="match status" value="1"/>
</dbReference>
<dbReference type="PRINTS" id="PR01415">
    <property type="entry name" value="ANKYRIN"/>
</dbReference>
<dbReference type="SMART" id="SM00248">
    <property type="entry name" value="ANK"/>
    <property type="match status" value="5"/>
</dbReference>
<dbReference type="SUPFAM" id="SSF48403">
    <property type="entry name" value="Ankyrin repeat"/>
    <property type="match status" value="1"/>
</dbReference>
<dbReference type="SUPFAM" id="SSF140860">
    <property type="entry name" value="Pseudo ankyrin repeat-like"/>
    <property type="match status" value="1"/>
</dbReference>
<dbReference type="SUPFAM" id="SSF47769">
    <property type="entry name" value="SAM/Pointed domain"/>
    <property type="match status" value="1"/>
</dbReference>
<dbReference type="PROSITE" id="PS50297">
    <property type="entry name" value="ANK_REP_REGION"/>
    <property type="match status" value="1"/>
</dbReference>
<dbReference type="PROSITE" id="PS50088">
    <property type="entry name" value="ANK_REPEAT"/>
    <property type="match status" value="3"/>
</dbReference>
<name>ASZ1_PANTR</name>
<comment type="function">
    <text evidence="1">Plays a central role during spermatogenesis by repressing transposable elements and preventing their mobilization, which is essential for the germline integrity. Acts via the piRNA metabolic process, which mediates the repression of transposable elements during meiosis by forming complexes composed of piRNAs and Piwi proteins and governs the methylation and subsequent repression of transposons. Its association with pi-bodies suggests a participation in the primary piRNAs metabolic process. Required prior to the pachytene stage to facilitate the production of multiple types of piRNAs, including those associated with repeats involved in the regulation of retrotransposons. May act by mediating protein-protein interactions during germ cell maturation (By similarity).</text>
</comment>
<comment type="subunit">
    <text evidence="1">Interacts with DDX4, PIWIL1, RANBP9 and TDRD1.</text>
</comment>
<comment type="subcellular location">
    <subcellularLocation>
        <location evidence="1">Cytoplasm</location>
    </subcellularLocation>
    <text evidence="1">Component of the meiotic nuage, also named P granule, a germ-cell-specific organelle required to repress transposon activity during meiosis. Specifically localizes to pi-bodies, a subset of the nuage which contains primary piRNAs (By similarity).</text>
</comment>
<organism>
    <name type="scientific">Pan troglodytes</name>
    <name type="common">Chimpanzee</name>
    <dbReference type="NCBI Taxonomy" id="9598"/>
    <lineage>
        <taxon>Eukaryota</taxon>
        <taxon>Metazoa</taxon>
        <taxon>Chordata</taxon>
        <taxon>Craniata</taxon>
        <taxon>Vertebrata</taxon>
        <taxon>Euteleostomi</taxon>
        <taxon>Mammalia</taxon>
        <taxon>Eutheria</taxon>
        <taxon>Euarchontoglires</taxon>
        <taxon>Primates</taxon>
        <taxon>Haplorrhini</taxon>
        <taxon>Catarrhini</taxon>
        <taxon>Hominidae</taxon>
        <taxon>Pan</taxon>
    </lineage>
</organism>
<sequence length="475" mass="53319">MAASALRGLPVAGGGESSESEDDGWEIGYLDRTSQKLKGLLPIEEKKEKFKKAMTIGDVSLVQELLDSGISVDSTFQYGWTPLMYAASVANAELVRVLLDRGANASFEKDKQSILITACSAHGSEEQILKCVELLLSRNADPNVACRRLMTPIMYAARDGHTQVVALLVAHGAEVNTQDENGYTALTWAARQGHKNIVLKLLELGANKMLQTKDGKMPSEIAKRNKHHEIFNLLSFTLNPLEGKLQQLTKEDTICKILTTDSDREKDHIFSSYTAFGDLEVFLHGLGLEHMTDILKERDITLRHLLTMREDEFTKNGITSKDQQKILAALKELQVEEIQFGELSEETKLEISGDEFLNFLLKLNKQCGHLITAVQNVITELPVNSQKITLEWASPQNFTSVCEELVNNVEDLSEKVCKLKDLIQKLQNERESDPTHIQLREEVSTWNSRILKRTAITICGFGFLLFICKLTFQRK</sequence>
<accession>Q8WMX6</accession>
<accession>Q2QLE6</accession>
<gene>
    <name type="primary">ASZ1</name>
    <name type="synonym">GASZ</name>
</gene>
<proteinExistence type="evidence at transcript level"/>
<evidence type="ECO:0000250" key="1"/>
<evidence type="ECO:0000250" key="2">
    <source>
        <dbReference type="UniProtKB" id="Q8VD46"/>
    </source>
</evidence>
<evidence type="ECO:0000256" key="3">
    <source>
        <dbReference type="SAM" id="MobiDB-lite"/>
    </source>
</evidence>
<keyword id="KW-0040">ANK repeat</keyword>
<keyword id="KW-0963">Cytoplasm</keyword>
<keyword id="KW-0217">Developmental protein</keyword>
<keyword id="KW-0221">Differentiation</keyword>
<keyword id="KW-0469">Meiosis</keyword>
<keyword id="KW-0597">Phosphoprotein</keyword>
<keyword id="KW-1185">Reference proteome</keyword>
<keyword id="KW-0677">Repeat</keyword>
<keyword id="KW-0943">RNA-mediated gene silencing</keyword>
<keyword id="KW-0744">Spermatogenesis</keyword>
<feature type="chain" id="PRO_0000066971" description="Ankyrin repeat, SAM and basic leucine zipper domain-containing protein 1">
    <location>
        <begin position="1"/>
        <end position="475"/>
    </location>
</feature>
<feature type="repeat" description="ANK 1">
    <location>
        <begin position="45"/>
        <end position="74"/>
    </location>
</feature>
<feature type="repeat" description="ANK 2">
    <location>
        <begin position="78"/>
        <end position="107"/>
    </location>
</feature>
<feature type="repeat" description="ANK 3">
    <location>
        <begin position="110"/>
        <end position="144"/>
    </location>
</feature>
<feature type="repeat" description="ANK 4">
    <location>
        <begin position="148"/>
        <end position="177"/>
    </location>
</feature>
<feature type="repeat" description="ANK 5">
    <location>
        <begin position="181"/>
        <end position="210"/>
    </location>
</feature>
<feature type="repeat" description="ANK 6">
    <location>
        <begin position="214"/>
        <end position="243"/>
    </location>
</feature>
<feature type="domain" description="SAM">
    <location>
        <begin position="272"/>
        <end position="334"/>
    </location>
</feature>
<feature type="region of interest" description="Disordered" evidence="3">
    <location>
        <begin position="1"/>
        <end position="25"/>
    </location>
</feature>
<feature type="modified residue" description="Phosphoserine" evidence="2">
    <location>
        <position position="17"/>
    </location>
</feature>
<feature type="modified residue" description="Phosphoserine" evidence="2">
    <location>
        <position position="18"/>
    </location>
</feature>
<feature type="modified residue" description="Phosphoserine" evidence="2">
    <location>
        <position position="20"/>
    </location>
</feature>